<reference key="1">
    <citation type="journal article" date="2006" name="Proc. Natl. Acad. Sci. U.S.A.">
        <title>Molecular genetic anatomy of inter- and intraserotype variation in the human bacterial pathogen group A Streptococcus.</title>
        <authorList>
            <person name="Beres S.B."/>
            <person name="Richter E.W."/>
            <person name="Nagiec M.J."/>
            <person name="Sumby P."/>
            <person name="Porcella S.F."/>
            <person name="DeLeo F.R."/>
            <person name="Musser J.M."/>
        </authorList>
    </citation>
    <scope>NUCLEOTIDE SEQUENCE [LARGE SCALE GENOMIC DNA]</scope>
    <source>
        <strain>MGAS10750</strain>
    </source>
</reference>
<name>Y295_STRPF</name>
<proteinExistence type="inferred from homology"/>
<protein>
    <recommendedName>
        <fullName evidence="1">UPF0154 protein MGAS10750_Spy0295</fullName>
    </recommendedName>
</protein>
<dbReference type="EMBL" id="CP000262">
    <property type="protein sequence ID" value="ABF37245.1"/>
    <property type="molecule type" value="Genomic_DNA"/>
</dbReference>
<dbReference type="SMR" id="Q1J8B6"/>
<dbReference type="KEGG" id="spi:MGAS10750_Spy0295"/>
<dbReference type="HOGENOM" id="CLU_180108_0_0_9"/>
<dbReference type="Proteomes" id="UP000002434">
    <property type="component" value="Chromosome"/>
</dbReference>
<dbReference type="GO" id="GO:0005886">
    <property type="term" value="C:plasma membrane"/>
    <property type="evidence" value="ECO:0007669"/>
    <property type="project" value="UniProtKB-SubCell"/>
</dbReference>
<dbReference type="HAMAP" id="MF_00363">
    <property type="entry name" value="UPF0154"/>
    <property type="match status" value="1"/>
</dbReference>
<dbReference type="InterPro" id="IPR005359">
    <property type="entry name" value="UPF0154"/>
</dbReference>
<dbReference type="Pfam" id="PF03672">
    <property type="entry name" value="UPF0154"/>
    <property type="match status" value="1"/>
</dbReference>
<gene>
    <name type="ordered locus">MGAS10750_Spy0295</name>
</gene>
<feature type="chain" id="PRO_1000005644" description="UPF0154 protein MGAS10750_Spy0295">
    <location>
        <begin position="1"/>
        <end position="80"/>
    </location>
</feature>
<feature type="transmembrane region" description="Helical" evidence="1">
    <location>
        <begin position="4"/>
        <end position="24"/>
    </location>
</feature>
<organism>
    <name type="scientific">Streptococcus pyogenes serotype M4 (strain MGAS10750)</name>
    <dbReference type="NCBI Taxonomy" id="370554"/>
    <lineage>
        <taxon>Bacteria</taxon>
        <taxon>Bacillati</taxon>
        <taxon>Bacillota</taxon>
        <taxon>Bacilli</taxon>
        <taxon>Lactobacillales</taxon>
        <taxon>Streptococcaceae</taxon>
        <taxon>Streptococcus</taxon>
    </lineage>
</organism>
<comment type="subcellular location">
    <subcellularLocation>
        <location evidence="1">Cell membrane</location>
        <topology evidence="1">Single-pass membrane protein</topology>
    </subcellularLocation>
</comment>
<comment type="similarity">
    <text evidence="1">Belongs to the UPF0154 family.</text>
</comment>
<sequence length="80" mass="8894">MSTAIWILLLIVALGVGVFGGIFIARKQIEKEIGEHPRLTPEAIREMMSQMGQKPSEAKIQQTYRNIIKQSKAAVSKGKK</sequence>
<accession>Q1J8B6</accession>
<keyword id="KW-1003">Cell membrane</keyword>
<keyword id="KW-0472">Membrane</keyword>
<keyword id="KW-0812">Transmembrane</keyword>
<keyword id="KW-1133">Transmembrane helix</keyword>
<evidence type="ECO:0000255" key="1">
    <source>
        <dbReference type="HAMAP-Rule" id="MF_00363"/>
    </source>
</evidence>